<gene>
    <name evidence="1" type="primary">cheB1</name>
    <name type="ordered locus">Rru_A0523</name>
</gene>
<feature type="chain" id="PRO_0000264311" description="Protein-glutamate methylesterase/protein-glutamine glutaminase 1">
    <location>
        <begin position="1"/>
        <end position="387"/>
    </location>
</feature>
<feature type="domain" description="Response regulatory" evidence="1">
    <location>
        <begin position="18"/>
        <end position="136"/>
    </location>
</feature>
<feature type="domain" description="CheB-type methylesterase" evidence="1">
    <location>
        <begin position="190"/>
        <end position="387"/>
    </location>
</feature>
<feature type="active site" evidence="1">
    <location>
        <position position="204"/>
    </location>
</feature>
<feature type="active site" evidence="1">
    <location>
        <position position="233"/>
    </location>
</feature>
<feature type="active site" evidence="1">
    <location>
        <position position="329"/>
    </location>
</feature>
<feature type="modified residue" description="4-aspartylphosphate" evidence="1">
    <location>
        <position position="69"/>
    </location>
</feature>
<accession>Q2RX18</accession>
<proteinExistence type="inferred from homology"/>
<evidence type="ECO:0000255" key="1">
    <source>
        <dbReference type="HAMAP-Rule" id="MF_00099"/>
    </source>
</evidence>
<protein>
    <recommendedName>
        <fullName evidence="1">Protein-glutamate methylesterase/protein-glutamine glutaminase 1</fullName>
        <ecNumber evidence="1">3.1.1.61</ecNumber>
        <ecNumber evidence="1">3.5.1.44</ecNumber>
    </recommendedName>
</protein>
<dbReference type="EC" id="3.1.1.61" evidence="1"/>
<dbReference type="EC" id="3.5.1.44" evidence="1"/>
<dbReference type="EMBL" id="CP000230">
    <property type="protein sequence ID" value="ABC21327.1"/>
    <property type="molecule type" value="Genomic_DNA"/>
</dbReference>
<dbReference type="RefSeq" id="WP_011388281.1">
    <property type="nucleotide sequence ID" value="NC_007643.1"/>
</dbReference>
<dbReference type="RefSeq" id="YP_425614.1">
    <property type="nucleotide sequence ID" value="NC_007643.1"/>
</dbReference>
<dbReference type="SMR" id="Q2RX18"/>
<dbReference type="STRING" id="269796.Rru_A0523"/>
<dbReference type="EnsemblBacteria" id="ABC21327">
    <property type="protein sequence ID" value="ABC21327"/>
    <property type="gene ID" value="Rru_A0523"/>
</dbReference>
<dbReference type="KEGG" id="rru:Rru_A0523"/>
<dbReference type="PATRIC" id="fig|269796.9.peg.577"/>
<dbReference type="eggNOG" id="COG2201">
    <property type="taxonomic scope" value="Bacteria"/>
</dbReference>
<dbReference type="HOGENOM" id="CLU_000445_51_0_5"/>
<dbReference type="PhylomeDB" id="Q2RX18"/>
<dbReference type="Proteomes" id="UP000001929">
    <property type="component" value="Chromosome"/>
</dbReference>
<dbReference type="GO" id="GO:0005737">
    <property type="term" value="C:cytoplasm"/>
    <property type="evidence" value="ECO:0007669"/>
    <property type="project" value="UniProtKB-SubCell"/>
</dbReference>
<dbReference type="GO" id="GO:0000156">
    <property type="term" value="F:phosphorelay response regulator activity"/>
    <property type="evidence" value="ECO:0007669"/>
    <property type="project" value="InterPro"/>
</dbReference>
<dbReference type="GO" id="GO:0008984">
    <property type="term" value="F:protein-glutamate methylesterase activity"/>
    <property type="evidence" value="ECO:0007669"/>
    <property type="project" value="UniProtKB-UniRule"/>
</dbReference>
<dbReference type="GO" id="GO:0050568">
    <property type="term" value="F:protein-glutamine glutaminase activity"/>
    <property type="evidence" value="ECO:0007669"/>
    <property type="project" value="UniProtKB-UniRule"/>
</dbReference>
<dbReference type="GO" id="GO:0006935">
    <property type="term" value="P:chemotaxis"/>
    <property type="evidence" value="ECO:0007669"/>
    <property type="project" value="UniProtKB-UniRule"/>
</dbReference>
<dbReference type="CDD" id="cd16432">
    <property type="entry name" value="CheB_Rec"/>
    <property type="match status" value="1"/>
</dbReference>
<dbReference type="CDD" id="cd17541">
    <property type="entry name" value="REC_CheB-like"/>
    <property type="match status" value="1"/>
</dbReference>
<dbReference type="Gene3D" id="3.40.50.2300">
    <property type="match status" value="1"/>
</dbReference>
<dbReference type="Gene3D" id="3.40.50.180">
    <property type="entry name" value="Methylesterase CheB, C-terminal domain"/>
    <property type="match status" value="1"/>
</dbReference>
<dbReference type="HAMAP" id="MF_00099">
    <property type="entry name" value="CheB_chemtxs"/>
    <property type="match status" value="1"/>
</dbReference>
<dbReference type="InterPro" id="IPR008248">
    <property type="entry name" value="CheB-like"/>
</dbReference>
<dbReference type="InterPro" id="IPR035909">
    <property type="entry name" value="CheB_C"/>
</dbReference>
<dbReference type="InterPro" id="IPR011006">
    <property type="entry name" value="CheY-like_superfamily"/>
</dbReference>
<dbReference type="InterPro" id="IPR000673">
    <property type="entry name" value="Sig_transdc_resp-reg_Me-estase"/>
</dbReference>
<dbReference type="InterPro" id="IPR001789">
    <property type="entry name" value="Sig_transdc_resp-reg_receiver"/>
</dbReference>
<dbReference type="NCBIfam" id="NF001965">
    <property type="entry name" value="PRK00742.1"/>
    <property type="match status" value="1"/>
</dbReference>
<dbReference type="PANTHER" id="PTHR42872">
    <property type="entry name" value="PROTEIN-GLUTAMATE METHYLESTERASE/PROTEIN-GLUTAMINE GLUTAMINASE"/>
    <property type="match status" value="1"/>
</dbReference>
<dbReference type="PANTHER" id="PTHR42872:SF3">
    <property type="entry name" value="PROTEIN-GLUTAMATE METHYLESTERASE_PROTEIN-GLUTAMINE GLUTAMINASE 1"/>
    <property type="match status" value="1"/>
</dbReference>
<dbReference type="Pfam" id="PF01339">
    <property type="entry name" value="CheB_methylest"/>
    <property type="match status" value="1"/>
</dbReference>
<dbReference type="Pfam" id="PF00072">
    <property type="entry name" value="Response_reg"/>
    <property type="match status" value="1"/>
</dbReference>
<dbReference type="PIRSF" id="PIRSF000876">
    <property type="entry name" value="RR_chemtxs_CheB"/>
    <property type="match status" value="1"/>
</dbReference>
<dbReference type="SMART" id="SM00448">
    <property type="entry name" value="REC"/>
    <property type="match status" value="1"/>
</dbReference>
<dbReference type="SUPFAM" id="SSF52172">
    <property type="entry name" value="CheY-like"/>
    <property type="match status" value="1"/>
</dbReference>
<dbReference type="SUPFAM" id="SSF52738">
    <property type="entry name" value="Methylesterase CheB, C-terminal domain"/>
    <property type="match status" value="1"/>
</dbReference>
<dbReference type="PROSITE" id="PS50122">
    <property type="entry name" value="CHEB"/>
    <property type="match status" value="1"/>
</dbReference>
<dbReference type="PROSITE" id="PS50110">
    <property type="entry name" value="RESPONSE_REGULATORY"/>
    <property type="match status" value="1"/>
</dbReference>
<keyword id="KW-0145">Chemotaxis</keyword>
<keyword id="KW-0963">Cytoplasm</keyword>
<keyword id="KW-0378">Hydrolase</keyword>
<keyword id="KW-0597">Phosphoprotein</keyword>
<keyword id="KW-1185">Reference proteome</keyword>
<organism>
    <name type="scientific">Rhodospirillum rubrum (strain ATCC 11170 / ATH 1.1.1 / DSM 467 / LMG 4362 / NCIMB 8255 / S1)</name>
    <dbReference type="NCBI Taxonomy" id="269796"/>
    <lineage>
        <taxon>Bacteria</taxon>
        <taxon>Pseudomonadati</taxon>
        <taxon>Pseudomonadota</taxon>
        <taxon>Alphaproteobacteria</taxon>
        <taxon>Rhodospirillales</taxon>
        <taxon>Rhodospirillaceae</taxon>
        <taxon>Rhodospirillum</taxon>
    </lineage>
</organism>
<sequence>MTITTSEATSHTLGGPIRVMVVDDSAVVRGLETRMLEEDPAIQVVASVGNGQMAVQALDRHDIEVVILDIEMPVMDGLTALPELLRKSPNLKVIMASTLTLRNAEVTLKALQMGASECLAKPTTSREISGGTDFRHDLVEKVKALGGARRRALGRAAPTARAGGAVVERKVGALPSLMAQRAQQPISLRPAAEERPDIIAIGSSTGGPQALFTVFGDMRKGGWPSQPIVVTQHMPATFTTILAGHIERVAGVPTAEAKDGDPIRGGHIYIAPGDYHMVVETRGTEKILRLNQDPPESFCRPAVDPLFRSVAKAYGRRVLAVVLTGMGADGSKGGKIIAESGGTVIAQDEPSSVVWGMPGATAQIGACSAVLPLKDIAAYVLRSANKR</sequence>
<name>CHEB1_RHORT</name>
<comment type="function">
    <text evidence="1">Involved in chemotaxis. Part of a chemotaxis signal transduction system that modulates chemotaxis in response to various stimuli. Catalyzes the demethylation of specific methylglutamate residues introduced into the chemoreceptors (methyl-accepting chemotaxis proteins or MCP) by CheR. Also mediates the irreversible deamidation of specific glutamine residues to glutamic acid.</text>
</comment>
<comment type="catalytic activity">
    <reaction evidence="1">
        <text>[protein]-L-glutamate 5-O-methyl ester + H2O = L-glutamyl-[protein] + methanol + H(+)</text>
        <dbReference type="Rhea" id="RHEA:23236"/>
        <dbReference type="Rhea" id="RHEA-COMP:10208"/>
        <dbReference type="Rhea" id="RHEA-COMP:10311"/>
        <dbReference type="ChEBI" id="CHEBI:15377"/>
        <dbReference type="ChEBI" id="CHEBI:15378"/>
        <dbReference type="ChEBI" id="CHEBI:17790"/>
        <dbReference type="ChEBI" id="CHEBI:29973"/>
        <dbReference type="ChEBI" id="CHEBI:82795"/>
        <dbReference type="EC" id="3.1.1.61"/>
    </reaction>
</comment>
<comment type="catalytic activity">
    <reaction evidence="1">
        <text>L-glutaminyl-[protein] + H2O = L-glutamyl-[protein] + NH4(+)</text>
        <dbReference type="Rhea" id="RHEA:16441"/>
        <dbReference type="Rhea" id="RHEA-COMP:10207"/>
        <dbReference type="Rhea" id="RHEA-COMP:10208"/>
        <dbReference type="ChEBI" id="CHEBI:15377"/>
        <dbReference type="ChEBI" id="CHEBI:28938"/>
        <dbReference type="ChEBI" id="CHEBI:29973"/>
        <dbReference type="ChEBI" id="CHEBI:30011"/>
        <dbReference type="EC" id="3.5.1.44"/>
    </reaction>
</comment>
<comment type="subcellular location">
    <subcellularLocation>
        <location evidence="1">Cytoplasm</location>
    </subcellularLocation>
</comment>
<comment type="domain">
    <text evidence="1">Contains a C-terminal catalytic domain, and an N-terminal region which modulates catalytic activity.</text>
</comment>
<comment type="PTM">
    <text evidence="1">Phosphorylated by CheA. Phosphorylation of the N-terminal regulatory domain activates the methylesterase activity.</text>
</comment>
<comment type="similarity">
    <text evidence="1">Belongs to the CheB family.</text>
</comment>
<reference key="1">
    <citation type="journal article" date="2011" name="Stand. Genomic Sci.">
        <title>Complete genome sequence of Rhodospirillum rubrum type strain (S1).</title>
        <authorList>
            <person name="Munk A.C."/>
            <person name="Copeland A."/>
            <person name="Lucas S."/>
            <person name="Lapidus A."/>
            <person name="Del Rio T.G."/>
            <person name="Barry K."/>
            <person name="Detter J.C."/>
            <person name="Hammon N."/>
            <person name="Israni S."/>
            <person name="Pitluck S."/>
            <person name="Brettin T."/>
            <person name="Bruce D."/>
            <person name="Han C."/>
            <person name="Tapia R."/>
            <person name="Gilna P."/>
            <person name="Schmutz J."/>
            <person name="Larimer F."/>
            <person name="Land M."/>
            <person name="Kyrpides N.C."/>
            <person name="Mavromatis K."/>
            <person name="Richardson P."/>
            <person name="Rohde M."/>
            <person name="Goeker M."/>
            <person name="Klenk H.P."/>
            <person name="Zhang Y."/>
            <person name="Roberts G.P."/>
            <person name="Reslewic S."/>
            <person name="Schwartz D.C."/>
        </authorList>
    </citation>
    <scope>NUCLEOTIDE SEQUENCE [LARGE SCALE GENOMIC DNA]</scope>
    <source>
        <strain>ATCC 11170 / ATH 1.1.1 / DSM 467 / LMG 4362 / NCIMB 8255 / S1</strain>
    </source>
</reference>